<accession>P9WG03</accession>
<accession>F2GFS6</accession>
<accession>L0T699</accession>
<accession>O50452</accession>
<accession>Q7D8J8</accession>
<name>SUGA_MYCTU</name>
<organism>
    <name type="scientific">Mycobacterium tuberculosis (strain ATCC 25618 / H37Rv)</name>
    <dbReference type="NCBI Taxonomy" id="83332"/>
    <lineage>
        <taxon>Bacteria</taxon>
        <taxon>Bacillati</taxon>
        <taxon>Actinomycetota</taxon>
        <taxon>Actinomycetes</taxon>
        <taxon>Mycobacteriales</taxon>
        <taxon>Mycobacteriaceae</taxon>
        <taxon>Mycobacterium</taxon>
        <taxon>Mycobacterium tuberculosis complex</taxon>
    </lineage>
</organism>
<proteinExistence type="evidence at protein level"/>
<reference key="1">
    <citation type="journal article" date="1998" name="Nature">
        <title>Deciphering the biology of Mycobacterium tuberculosis from the complete genome sequence.</title>
        <authorList>
            <person name="Cole S.T."/>
            <person name="Brosch R."/>
            <person name="Parkhill J."/>
            <person name="Garnier T."/>
            <person name="Churcher C.M."/>
            <person name="Harris D.E."/>
            <person name="Gordon S.V."/>
            <person name="Eiglmeier K."/>
            <person name="Gas S."/>
            <person name="Barry C.E. III"/>
            <person name="Tekaia F."/>
            <person name="Badcock K."/>
            <person name="Basham D."/>
            <person name="Brown D."/>
            <person name="Chillingworth T."/>
            <person name="Connor R."/>
            <person name="Davies R.M."/>
            <person name="Devlin K."/>
            <person name="Feltwell T."/>
            <person name="Gentles S."/>
            <person name="Hamlin N."/>
            <person name="Holroyd S."/>
            <person name="Hornsby T."/>
            <person name="Jagels K."/>
            <person name="Krogh A."/>
            <person name="McLean J."/>
            <person name="Moule S."/>
            <person name="Murphy L.D."/>
            <person name="Oliver S."/>
            <person name="Osborne J."/>
            <person name="Quail M.A."/>
            <person name="Rajandream M.A."/>
            <person name="Rogers J."/>
            <person name="Rutter S."/>
            <person name="Seeger K."/>
            <person name="Skelton S."/>
            <person name="Squares S."/>
            <person name="Squares R."/>
            <person name="Sulston J.E."/>
            <person name="Taylor K."/>
            <person name="Whitehead S."/>
            <person name="Barrell B.G."/>
        </authorList>
    </citation>
    <scope>NUCLEOTIDE SEQUENCE [LARGE SCALE GENOMIC DNA]</scope>
    <source>
        <strain>ATCC 25618 / H37Rv</strain>
    </source>
</reference>
<reference key="2">
    <citation type="journal article" date="2010" name="Proc. Natl. Acad. Sci. U.S.A.">
        <title>Trehalose-recycling ABC transporter LpqY-SugA-SugB-SugC is essential for virulence of Mycobacterium tuberculosis.</title>
        <authorList>
            <person name="Kalscheuer R."/>
            <person name="Weinrick B."/>
            <person name="Veeraraghavan U."/>
            <person name="Besra G.S."/>
            <person name="Jacobs W.R. Jr."/>
        </authorList>
    </citation>
    <scope>FUNCTION IN TREHALOSE IMPORT</scope>
    <scope>SUBUNIT</scope>
    <source>
        <strain>ATCC 25618 / H37Rv</strain>
    </source>
</reference>
<comment type="function">
    <text evidence="2">Part of the ABC transporter complex LpqY-SugA-SugB-SugC, which is highly specific for uptake of trehalose. Involved in the recycling of extracellular trehalose released from trehalose-containing molecules synthesized by M.tuberculosis. Trehalose uptake is essential for virulence. Probably responsible for the translocation of the substrate across the membrane.</text>
</comment>
<comment type="subunit">
    <text evidence="4">The complex is composed of two ATP-binding proteins (SugC), two transmembrane proteins (Suga and SugB) and a solute-binding protein (LpqY).</text>
</comment>
<comment type="subcellular location">
    <subcellularLocation>
        <location evidence="3">Cell inner membrane</location>
        <topology evidence="1">Multi-pass membrane protein</topology>
    </subcellularLocation>
</comment>
<comment type="similarity">
    <text evidence="3">Belongs to the binding-protein-dependent transport system permease family.</text>
</comment>
<feature type="chain" id="PRO_0000419315" description="Trehalose transport system permease protein SugA">
    <location>
        <begin position="1"/>
        <end position="307"/>
    </location>
</feature>
<feature type="transmembrane region" description="Helical" evidence="1">
    <location>
        <begin position="25"/>
        <end position="45"/>
    </location>
</feature>
<feature type="transmembrane region" description="Helical" evidence="1">
    <location>
        <begin position="89"/>
        <end position="109"/>
    </location>
</feature>
<feature type="transmembrane region" description="Helical" evidence="1">
    <location>
        <begin position="123"/>
        <end position="143"/>
    </location>
</feature>
<feature type="transmembrane region" description="Helical" evidence="1">
    <location>
        <begin position="168"/>
        <end position="188"/>
    </location>
</feature>
<feature type="transmembrane region" description="Helical" evidence="1">
    <location>
        <begin position="217"/>
        <end position="237"/>
    </location>
</feature>
<feature type="transmembrane region" description="Helical" evidence="1">
    <location>
        <begin position="272"/>
        <end position="292"/>
    </location>
</feature>
<feature type="domain" description="ABC transmembrane type-1" evidence="1">
    <location>
        <begin position="85"/>
        <end position="291"/>
    </location>
</feature>
<feature type="helix" evidence="5">
    <location>
        <begin position="20"/>
        <end position="51"/>
    </location>
</feature>
<feature type="strand" evidence="5">
    <location>
        <begin position="57"/>
        <end position="60"/>
    </location>
</feature>
<feature type="turn" evidence="5">
    <location>
        <begin position="70"/>
        <end position="72"/>
    </location>
</feature>
<feature type="helix" evidence="5">
    <location>
        <begin position="73"/>
        <end position="76"/>
    </location>
</feature>
<feature type="helix" evidence="5">
    <location>
        <begin position="80"/>
        <end position="112"/>
    </location>
</feature>
<feature type="helix" evidence="5">
    <location>
        <begin position="117"/>
        <end position="129"/>
    </location>
</feature>
<feature type="helix" evidence="5">
    <location>
        <begin position="134"/>
        <end position="142"/>
    </location>
</feature>
<feature type="turn" evidence="5">
    <location>
        <begin position="145"/>
        <end position="147"/>
    </location>
</feature>
<feature type="turn" evidence="5">
    <location>
        <begin position="149"/>
        <end position="153"/>
    </location>
</feature>
<feature type="strand" evidence="5">
    <location>
        <begin position="154"/>
        <end position="157"/>
    </location>
</feature>
<feature type="turn" evidence="5">
    <location>
        <begin position="160"/>
        <end position="162"/>
    </location>
</feature>
<feature type="helix" evidence="5">
    <location>
        <begin position="164"/>
        <end position="191"/>
    </location>
</feature>
<feature type="helix" evidence="5">
    <location>
        <begin position="196"/>
        <end position="205"/>
    </location>
</feature>
<feature type="helix" evidence="5">
    <location>
        <begin position="211"/>
        <end position="220"/>
    </location>
</feature>
<feature type="helix" evidence="5">
    <location>
        <begin position="222"/>
        <end position="236"/>
    </location>
</feature>
<feature type="helix" evidence="5">
    <location>
        <begin position="241"/>
        <end position="246"/>
    </location>
</feature>
<feature type="turn" evidence="5">
    <location>
        <begin position="247"/>
        <end position="249"/>
    </location>
</feature>
<feature type="helix" evidence="5">
    <location>
        <begin position="256"/>
        <end position="265"/>
    </location>
</feature>
<feature type="helix" evidence="5">
    <location>
        <begin position="270"/>
        <end position="293"/>
    </location>
</feature>
<keyword id="KW-0002">3D-structure</keyword>
<keyword id="KW-0997">Cell inner membrane</keyword>
<keyword id="KW-1003">Cell membrane</keyword>
<keyword id="KW-0472">Membrane</keyword>
<keyword id="KW-1185">Reference proteome</keyword>
<keyword id="KW-0762">Sugar transport</keyword>
<keyword id="KW-0812">Transmembrane</keyword>
<keyword id="KW-1133">Transmembrane helix</keyword>
<keyword id="KW-0813">Transport</keyword>
<evidence type="ECO:0000255" key="1">
    <source>
        <dbReference type="PROSITE-ProRule" id="PRU00441"/>
    </source>
</evidence>
<evidence type="ECO:0000269" key="2">
    <source>
    </source>
</evidence>
<evidence type="ECO:0000305" key="3"/>
<evidence type="ECO:0000305" key="4">
    <source>
    </source>
</evidence>
<evidence type="ECO:0007829" key="5">
    <source>
        <dbReference type="PDB" id="8JA7"/>
    </source>
</evidence>
<dbReference type="EMBL" id="AL123456">
    <property type="protein sequence ID" value="CCP43992.1"/>
    <property type="molecule type" value="Genomic_DNA"/>
</dbReference>
<dbReference type="PIR" id="C70952">
    <property type="entry name" value="C70952"/>
</dbReference>
<dbReference type="RefSeq" id="NP_215752.1">
    <property type="nucleotide sequence ID" value="NC_000962.3"/>
</dbReference>
<dbReference type="RefSeq" id="WP_003406295.1">
    <property type="nucleotide sequence ID" value="NZ_NVQJ01000039.1"/>
</dbReference>
<dbReference type="PDB" id="8JA7">
    <property type="method" value="EM"/>
    <property type="resolution" value="3.02 A"/>
    <property type="chains" value="A=2-307"/>
</dbReference>
<dbReference type="PDBsum" id="8JA7"/>
<dbReference type="EMDB" id="EMD-36125"/>
<dbReference type="SMR" id="P9WG03"/>
<dbReference type="FunCoup" id="P9WG03">
    <property type="interactions" value="83"/>
</dbReference>
<dbReference type="STRING" id="83332.Rv1236"/>
<dbReference type="PaxDb" id="83332-Rv1236"/>
<dbReference type="DNASU" id="887124"/>
<dbReference type="GeneID" id="45425206"/>
<dbReference type="GeneID" id="887124"/>
<dbReference type="KEGG" id="mtu:Rv1236"/>
<dbReference type="KEGG" id="mtv:RVBD_1236"/>
<dbReference type="TubercuList" id="Rv1236"/>
<dbReference type="eggNOG" id="COG1175">
    <property type="taxonomic scope" value="Bacteria"/>
</dbReference>
<dbReference type="InParanoid" id="P9WG03"/>
<dbReference type="OrthoDB" id="9804439at2"/>
<dbReference type="PhylomeDB" id="P9WG03"/>
<dbReference type="BioCyc" id="MetaCyc:G185E-5407-MONOMER"/>
<dbReference type="Proteomes" id="UP000001584">
    <property type="component" value="Chromosome"/>
</dbReference>
<dbReference type="GO" id="GO:0005886">
    <property type="term" value="C:plasma membrane"/>
    <property type="evidence" value="ECO:0007669"/>
    <property type="project" value="UniProtKB-SubCell"/>
</dbReference>
<dbReference type="GO" id="GO:0051701">
    <property type="term" value="P:biological process involved in interaction with host"/>
    <property type="evidence" value="ECO:0000315"/>
    <property type="project" value="MTBBASE"/>
</dbReference>
<dbReference type="GO" id="GO:0055085">
    <property type="term" value="P:transmembrane transport"/>
    <property type="evidence" value="ECO:0007669"/>
    <property type="project" value="InterPro"/>
</dbReference>
<dbReference type="CDD" id="cd06261">
    <property type="entry name" value="TM_PBP2"/>
    <property type="match status" value="1"/>
</dbReference>
<dbReference type="Gene3D" id="1.10.3720.10">
    <property type="entry name" value="MetI-like"/>
    <property type="match status" value="1"/>
</dbReference>
<dbReference type="InterPro" id="IPR000515">
    <property type="entry name" value="MetI-like"/>
</dbReference>
<dbReference type="InterPro" id="IPR035906">
    <property type="entry name" value="MetI-like_sf"/>
</dbReference>
<dbReference type="InterPro" id="IPR052730">
    <property type="entry name" value="Sugar_ABC_transporter"/>
</dbReference>
<dbReference type="PANTHER" id="PTHR43759:SF1">
    <property type="entry name" value="GLUCOSE IMPORT SYSTEM PERMEASE PROTEIN GLCT"/>
    <property type="match status" value="1"/>
</dbReference>
<dbReference type="PANTHER" id="PTHR43759">
    <property type="entry name" value="TREHALOSE TRANSPORT SYSTEM PERMEASE PROTEIN SUGA"/>
    <property type="match status" value="1"/>
</dbReference>
<dbReference type="Pfam" id="PF00528">
    <property type="entry name" value="BPD_transp_1"/>
    <property type="match status" value="1"/>
</dbReference>
<dbReference type="SUPFAM" id="SSF161098">
    <property type="entry name" value="MetI-like"/>
    <property type="match status" value="1"/>
</dbReference>
<dbReference type="PROSITE" id="PS50928">
    <property type="entry name" value="ABC_TM1"/>
    <property type="match status" value="1"/>
</dbReference>
<sequence>MTSVEQRTATAVFSRTGSRMAERRLAFMLVAPAAMLMVAVTAYPIGYALWLSLQRNNLATPNDTAFIGLGNYHTILIDRYWWTALAVTLAITAVSVTIEFVLGLALALVMHRTLIGKGLVRTAVLIPYGIVTVVASYSWYYAWTPGTGYLANLLPYDSAPLTQQIPSLGIVVIAEVWKTTPFMSLLLLAGLALVPEDLLRAAQVDGASAWRRLTKVILPMIKPAIVVALLFRTLDAFRIFDNIYVLTGGSNNTGSVSILGYDNLFKGFNVGLGSAISVLIFGCVAVIAFIFIKLFGAAAPGGEPSGR</sequence>
<protein>
    <recommendedName>
        <fullName>Trehalose transport system permease protein SugA</fullName>
    </recommendedName>
</protein>
<gene>
    <name type="primary">sugA</name>
    <name type="ordered locus">Rv1236</name>
</gene>